<proteinExistence type="evidence at transcript level"/>
<evidence type="ECO:0000305" key="1"/>
<comment type="subcellular location">
    <subcellularLocation>
        <location evidence="1">Mitochondrion</location>
    </subcellularLocation>
</comment>
<comment type="miscellaneous">
    <text>A stretch of 270 kb of the mitochondrial genome is duplicated within the centromere of chromosome 2 resulting in the duplication of the gene. The expression of this duplicated gene (At2g07714) is demonstrated.</text>
</comment>
<comment type="sequence caution" evidence="1">
    <conflict type="erroneous gene model prediction">
        <sequence resource="EMBL-CDS" id="AAM15492"/>
    </conflict>
</comment>
<comment type="sequence caution" evidence="1">
    <conflict type="frameshift">
        <sequence resource="EMBL-CDS" id="AAM15492"/>
    </conflict>
</comment>
<comment type="sequence caution" evidence="1">
    <conflict type="frameshift">
        <sequence resource="EMBL-CDS" id="BAF01769"/>
    </conflict>
</comment>
<reference key="1">
    <citation type="journal article" date="1997" name="Nat. Genet.">
        <title>The mitochondrial genome of Arabidopsis thaliana contains 57 genes in 366,924 nucleotides.</title>
        <authorList>
            <person name="Unseld M."/>
            <person name="Marienfeld J.R."/>
            <person name="Brandt P."/>
            <person name="Brennicke A."/>
        </authorList>
    </citation>
    <scope>NUCLEOTIDE SEQUENCE [LARGE SCALE GENOMIC DNA]</scope>
    <source>
        <strain>cv. C24</strain>
    </source>
</reference>
<reference key="2">
    <citation type="journal article" date="2018" name="Plant Cell">
        <title>Correction of persistent errors in Arabidopsis reference mitochondrial genomes.</title>
        <authorList>
            <person name="Sloan D.B."/>
            <person name="Wu Z."/>
            <person name="Sharbrough J."/>
        </authorList>
    </citation>
    <scope>NUCLEOTIDE SEQUENCE [LARGE SCALE GENOMIC DNA]</scope>
    <source>
        <strain>cv. Columbia</strain>
    </source>
</reference>
<reference key="3">
    <citation type="journal article" date="1999" name="Nature">
        <title>Sequence and analysis of chromosome 2 of the plant Arabidopsis thaliana.</title>
        <authorList>
            <person name="Lin X."/>
            <person name="Kaul S."/>
            <person name="Rounsley S.D."/>
            <person name="Shea T.P."/>
            <person name="Benito M.-I."/>
            <person name="Town C.D."/>
            <person name="Fujii C.Y."/>
            <person name="Mason T.M."/>
            <person name="Bowman C.L."/>
            <person name="Barnstead M.E."/>
            <person name="Feldblyum T.V."/>
            <person name="Buell C.R."/>
            <person name="Ketchum K.A."/>
            <person name="Lee J.J."/>
            <person name="Ronning C.M."/>
            <person name="Koo H.L."/>
            <person name="Moffat K.S."/>
            <person name="Cronin L.A."/>
            <person name="Shen M."/>
            <person name="Pai G."/>
            <person name="Van Aken S."/>
            <person name="Umayam L."/>
            <person name="Tallon L.J."/>
            <person name="Gill J.E."/>
            <person name="Adams M.D."/>
            <person name="Carrera A.J."/>
            <person name="Creasy T.H."/>
            <person name="Goodman H.M."/>
            <person name="Somerville C.R."/>
            <person name="Copenhaver G.P."/>
            <person name="Preuss D."/>
            <person name="Nierman W.C."/>
            <person name="White O."/>
            <person name="Eisen J.A."/>
            <person name="Salzberg S.L."/>
            <person name="Fraser C.M."/>
            <person name="Venter J.C."/>
        </authorList>
    </citation>
    <scope>NUCLEOTIDE SEQUENCE [LARGE SCALE GENOMIC DNA] (AT2G07714)</scope>
    <source>
        <strain>cv. Columbia</strain>
    </source>
</reference>
<reference key="4">
    <citation type="submission" date="2006-07" db="EMBL/GenBank/DDBJ databases">
        <title>Large-scale analysis of RIKEN Arabidopsis full-length (RAFL) cDNAs.</title>
        <authorList>
            <person name="Totoki Y."/>
            <person name="Seki M."/>
            <person name="Ishida J."/>
            <person name="Nakajima M."/>
            <person name="Enju A."/>
            <person name="Kamiya A."/>
            <person name="Narusaka M."/>
            <person name="Shin-i T."/>
            <person name="Nakagawa M."/>
            <person name="Sakamoto N."/>
            <person name="Oishi K."/>
            <person name="Kohara Y."/>
            <person name="Kobayashi M."/>
            <person name="Toyoda A."/>
            <person name="Sakaki Y."/>
            <person name="Sakurai T."/>
            <person name="Iida K."/>
            <person name="Akiyama K."/>
            <person name="Satou M."/>
            <person name="Toyoda T."/>
            <person name="Konagaya A."/>
            <person name="Carninci P."/>
            <person name="Kawai J."/>
            <person name="Hayashizaki Y."/>
            <person name="Shinozaki K."/>
        </authorList>
    </citation>
    <scope>NUCLEOTIDE SEQUENCE [LARGE SCALE MRNA] (AT2G07714)</scope>
    <source>
        <strain>cv. Columbia</strain>
    </source>
</reference>
<gene>
    <name type="ordered locus">AtMg00550</name>
</gene>
<dbReference type="EMBL" id="Y08501">
    <property type="protein sequence ID" value="CAA69739.1"/>
    <property type="molecule type" value="Genomic_DNA"/>
</dbReference>
<dbReference type="EMBL" id="BK010421">
    <property type="status" value="NOT_ANNOTATED_CDS"/>
    <property type="molecule type" value="Genomic_DNA"/>
</dbReference>
<dbReference type="EMBL" id="AC007729">
    <property type="protein sequence ID" value="AAM15492.1"/>
    <property type="status" value="ALT_SEQ"/>
    <property type="molecule type" value="Genomic_DNA"/>
</dbReference>
<dbReference type="EMBL" id="AK229943">
    <property type="protein sequence ID" value="BAF01769.1"/>
    <property type="status" value="ALT_FRAME"/>
    <property type="molecule type" value="mRNA"/>
</dbReference>
<dbReference type="RefSeq" id="NP_085515.1">
    <property type="nucleotide sequence ID" value="NC_001284.2"/>
</dbReference>
<dbReference type="RefSeq" id="NP_178796.1">
    <property type="nucleotide sequence ID" value="NM_126754.1"/>
</dbReference>
<dbReference type="STRING" id="3702.P93310"/>
<dbReference type="PaxDb" id="3702-ATMG00550.1"/>
<dbReference type="EnsemblPlants" id="ATMG00550.1">
    <property type="protein sequence ID" value="ATMG00550.1"/>
    <property type="gene ID" value="ATMG00550"/>
</dbReference>
<dbReference type="Gramene" id="ATMG00550.1">
    <property type="protein sequence ID" value="ATMG00550.1"/>
    <property type="gene ID" value="ATMG00550"/>
</dbReference>
<dbReference type="KEGG" id="ath:AT2G07714"/>
<dbReference type="Araport" id="ATMG00550"/>
<dbReference type="TAIR" id="ATMG00550">
    <property type="gene designation" value="ORF160"/>
</dbReference>
<dbReference type="eggNOG" id="KOG1844">
    <property type="taxonomic scope" value="Eukaryota"/>
</dbReference>
<dbReference type="HOGENOM" id="CLU_120170_0_0_1"/>
<dbReference type="InParanoid" id="P93310"/>
<dbReference type="PhylomeDB" id="P93310"/>
<dbReference type="PRO" id="PR:P93310"/>
<dbReference type="Proteomes" id="UP000006548">
    <property type="component" value="Mitochondrion MT"/>
</dbReference>
<dbReference type="GO" id="GO:0005739">
    <property type="term" value="C:mitochondrion"/>
    <property type="evidence" value="ECO:0007669"/>
    <property type="project" value="UniProtKB-SubCell"/>
</dbReference>
<dbReference type="PANTHER" id="PTHR46201:SF9">
    <property type="entry name" value="PHD FINGER PROTEIN MALE MEIOCYTE DEATH 1"/>
    <property type="match status" value="1"/>
</dbReference>
<dbReference type="PANTHER" id="PTHR46201">
    <property type="entry name" value="PHD FINGER PROTEIN MALE MEIOCYTE DEATH 1-RELATED"/>
    <property type="match status" value="1"/>
</dbReference>
<keyword id="KW-0496">Mitochondrion</keyword>
<keyword id="KW-1185">Reference proteome</keyword>
<feature type="chain" id="PRO_0000196777" description="Uncharacterized mitochondrial protein AtMg00550">
    <location>
        <begin position="1"/>
        <end position="160"/>
    </location>
</feature>
<sequence>MDLRLLHGVAYGHSWFGKWGYRFCSGSFGVEEHHYHRAIAFLTSISLVDDITANFRENKANLNIGDIVRCYRDMSEIQLTTLQDLLRFMLTIKSRAPPIRIPIGKIEAPSVVLPSMKAYGTRACPQVKQCPKDKEKSVKCRKFALPLPYRLAFTSLSVVV</sequence>
<name>M550_ARATH</name>
<protein>
    <recommendedName>
        <fullName>Uncharacterized mitochondrial protein AtMg00550</fullName>
    </recommendedName>
    <alternativeName>
        <fullName>ORF160</fullName>
    </alternativeName>
</protein>
<organism>
    <name type="scientific">Arabidopsis thaliana</name>
    <name type="common">Mouse-ear cress</name>
    <dbReference type="NCBI Taxonomy" id="3702"/>
    <lineage>
        <taxon>Eukaryota</taxon>
        <taxon>Viridiplantae</taxon>
        <taxon>Streptophyta</taxon>
        <taxon>Embryophyta</taxon>
        <taxon>Tracheophyta</taxon>
        <taxon>Spermatophyta</taxon>
        <taxon>Magnoliopsida</taxon>
        <taxon>eudicotyledons</taxon>
        <taxon>Gunneridae</taxon>
        <taxon>Pentapetalae</taxon>
        <taxon>rosids</taxon>
        <taxon>malvids</taxon>
        <taxon>Brassicales</taxon>
        <taxon>Brassicaceae</taxon>
        <taxon>Camelineae</taxon>
        <taxon>Arabidopsis</taxon>
    </lineage>
</organism>
<geneLocation type="mitochondrion"/>
<accession>P93310</accession>
<accession>Q0WM87</accession>
<accession>Q27GH9</accession>
<accession>Q8S888</accession>